<dbReference type="EC" id="5.6.1.7" evidence="2"/>
<dbReference type="EMBL" id="BA000034">
    <property type="protein sequence ID" value="BAC64857.1"/>
    <property type="molecule type" value="Genomic_DNA"/>
</dbReference>
<dbReference type="RefSeq" id="WP_011055068.1">
    <property type="nucleotide sequence ID" value="NC_004606.1"/>
</dbReference>
<dbReference type="SMR" id="P0DA23"/>
<dbReference type="KEGG" id="sps:SPs1762"/>
<dbReference type="HOGENOM" id="CLU_016503_3_0_9"/>
<dbReference type="GO" id="GO:0005737">
    <property type="term" value="C:cytoplasm"/>
    <property type="evidence" value="ECO:0007669"/>
    <property type="project" value="UniProtKB-SubCell"/>
</dbReference>
<dbReference type="GO" id="GO:0005524">
    <property type="term" value="F:ATP binding"/>
    <property type="evidence" value="ECO:0007669"/>
    <property type="project" value="UniProtKB-UniRule"/>
</dbReference>
<dbReference type="GO" id="GO:0140662">
    <property type="term" value="F:ATP-dependent protein folding chaperone"/>
    <property type="evidence" value="ECO:0007669"/>
    <property type="project" value="InterPro"/>
</dbReference>
<dbReference type="GO" id="GO:0016853">
    <property type="term" value="F:isomerase activity"/>
    <property type="evidence" value="ECO:0007669"/>
    <property type="project" value="UniProtKB-KW"/>
</dbReference>
<dbReference type="GO" id="GO:0051082">
    <property type="term" value="F:unfolded protein binding"/>
    <property type="evidence" value="ECO:0007669"/>
    <property type="project" value="UniProtKB-UniRule"/>
</dbReference>
<dbReference type="GO" id="GO:0042026">
    <property type="term" value="P:protein refolding"/>
    <property type="evidence" value="ECO:0007669"/>
    <property type="project" value="UniProtKB-UniRule"/>
</dbReference>
<dbReference type="CDD" id="cd03344">
    <property type="entry name" value="GroEL"/>
    <property type="match status" value="1"/>
</dbReference>
<dbReference type="FunFam" id="1.10.560.10:FF:000001">
    <property type="entry name" value="60 kDa chaperonin"/>
    <property type="match status" value="1"/>
</dbReference>
<dbReference type="FunFam" id="3.50.7.10:FF:000001">
    <property type="entry name" value="60 kDa chaperonin"/>
    <property type="match status" value="1"/>
</dbReference>
<dbReference type="Gene3D" id="3.50.7.10">
    <property type="entry name" value="GroEL"/>
    <property type="match status" value="1"/>
</dbReference>
<dbReference type="Gene3D" id="1.10.560.10">
    <property type="entry name" value="GroEL-like equatorial domain"/>
    <property type="match status" value="1"/>
</dbReference>
<dbReference type="Gene3D" id="3.30.260.10">
    <property type="entry name" value="TCP-1-like chaperonin intermediate domain"/>
    <property type="match status" value="1"/>
</dbReference>
<dbReference type="HAMAP" id="MF_00600">
    <property type="entry name" value="CH60"/>
    <property type="match status" value="1"/>
</dbReference>
<dbReference type="InterPro" id="IPR018370">
    <property type="entry name" value="Chaperonin_Cpn60_CS"/>
</dbReference>
<dbReference type="InterPro" id="IPR001844">
    <property type="entry name" value="Cpn60/GroEL"/>
</dbReference>
<dbReference type="InterPro" id="IPR002423">
    <property type="entry name" value="Cpn60/GroEL/TCP-1"/>
</dbReference>
<dbReference type="InterPro" id="IPR027409">
    <property type="entry name" value="GroEL-like_apical_dom_sf"/>
</dbReference>
<dbReference type="InterPro" id="IPR027413">
    <property type="entry name" value="GROEL-like_equatorial_sf"/>
</dbReference>
<dbReference type="InterPro" id="IPR027410">
    <property type="entry name" value="TCP-1-like_intermed_sf"/>
</dbReference>
<dbReference type="NCBIfam" id="TIGR02348">
    <property type="entry name" value="GroEL"/>
    <property type="match status" value="1"/>
</dbReference>
<dbReference type="NCBIfam" id="NF000592">
    <property type="entry name" value="PRK00013.1"/>
    <property type="match status" value="1"/>
</dbReference>
<dbReference type="NCBIfam" id="NF009487">
    <property type="entry name" value="PRK12849.1"/>
    <property type="match status" value="1"/>
</dbReference>
<dbReference type="NCBIfam" id="NF009488">
    <property type="entry name" value="PRK12850.1"/>
    <property type="match status" value="1"/>
</dbReference>
<dbReference type="NCBIfam" id="NF009489">
    <property type="entry name" value="PRK12851.1"/>
    <property type="match status" value="1"/>
</dbReference>
<dbReference type="PANTHER" id="PTHR45633">
    <property type="entry name" value="60 KDA HEAT SHOCK PROTEIN, MITOCHONDRIAL"/>
    <property type="match status" value="1"/>
</dbReference>
<dbReference type="Pfam" id="PF00118">
    <property type="entry name" value="Cpn60_TCP1"/>
    <property type="match status" value="1"/>
</dbReference>
<dbReference type="PRINTS" id="PR00298">
    <property type="entry name" value="CHAPERONIN60"/>
</dbReference>
<dbReference type="SUPFAM" id="SSF52029">
    <property type="entry name" value="GroEL apical domain-like"/>
    <property type="match status" value="1"/>
</dbReference>
<dbReference type="SUPFAM" id="SSF48592">
    <property type="entry name" value="GroEL equatorial domain-like"/>
    <property type="match status" value="1"/>
</dbReference>
<dbReference type="SUPFAM" id="SSF54849">
    <property type="entry name" value="GroEL-intermediate domain like"/>
    <property type="match status" value="1"/>
</dbReference>
<dbReference type="PROSITE" id="PS00296">
    <property type="entry name" value="CHAPERONINS_CPN60"/>
    <property type="match status" value="1"/>
</dbReference>
<organism>
    <name type="scientific">Streptococcus pyogenes serotype M3 (strain SSI-1)</name>
    <dbReference type="NCBI Taxonomy" id="193567"/>
    <lineage>
        <taxon>Bacteria</taxon>
        <taxon>Bacillati</taxon>
        <taxon>Bacillota</taxon>
        <taxon>Bacilli</taxon>
        <taxon>Lactobacillales</taxon>
        <taxon>Streptococcaceae</taxon>
        <taxon>Streptococcus</taxon>
    </lineage>
</organism>
<name>CH60_STRPQ</name>
<evidence type="ECO:0000250" key="1"/>
<evidence type="ECO:0000255" key="2">
    <source>
        <dbReference type="HAMAP-Rule" id="MF_00600"/>
    </source>
</evidence>
<accession>P0DA23</accession>
<accession>Q8K5M5</accession>
<gene>
    <name evidence="2" type="primary">groEL</name>
    <name evidence="2" type="synonym">groL</name>
    <name type="ordered locus">SPs1762</name>
</gene>
<proteinExistence type="inferred from homology"/>
<reference key="1">
    <citation type="journal article" date="2003" name="Genome Res.">
        <title>Genome sequence of an M3 strain of Streptococcus pyogenes reveals a large-scale genomic rearrangement in invasive strains and new insights into phage evolution.</title>
        <authorList>
            <person name="Nakagawa I."/>
            <person name="Kurokawa K."/>
            <person name="Yamashita A."/>
            <person name="Nakata M."/>
            <person name="Tomiyasu Y."/>
            <person name="Okahashi N."/>
            <person name="Kawabata S."/>
            <person name="Yamazaki K."/>
            <person name="Shiba T."/>
            <person name="Yasunaga T."/>
            <person name="Hayashi H."/>
            <person name="Hattori M."/>
            <person name="Hamada S."/>
        </authorList>
    </citation>
    <scope>NUCLEOTIDE SEQUENCE [LARGE SCALE GENOMIC DNA]</scope>
    <source>
        <strain>SSI-1</strain>
    </source>
</reference>
<comment type="function">
    <text evidence="2">Together with its co-chaperonin GroES, plays an essential role in assisting protein folding. The GroEL-GroES system forms a nano-cage that allows encapsulation of the non-native substrate proteins and provides a physical environment optimized to promote and accelerate protein folding.</text>
</comment>
<comment type="catalytic activity">
    <reaction evidence="2">
        <text>ATP + H2O + a folded polypeptide = ADP + phosphate + an unfolded polypeptide.</text>
        <dbReference type="EC" id="5.6.1.7"/>
    </reaction>
</comment>
<comment type="subunit">
    <text evidence="2">Forms a cylinder of 14 subunits composed of two heptameric rings stacked back-to-back. Interacts with the co-chaperonin GroES.</text>
</comment>
<comment type="subcellular location">
    <subcellularLocation>
        <location evidence="2">Cytoplasm</location>
    </subcellularLocation>
</comment>
<comment type="similarity">
    <text evidence="2">Belongs to the chaperonin (HSP60) family.</text>
</comment>
<feature type="initiator methionine" description="Removed" evidence="1">
    <location>
        <position position="1"/>
    </location>
</feature>
<feature type="chain" id="PRO_0000411299" description="Chaperonin GroEL">
    <location>
        <begin position="2"/>
        <end position="543"/>
    </location>
</feature>
<feature type="binding site" evidence="2">
    <location>
        <begin position="29"/>
        <end position="32"/>
    </location>
    <ligand>
        <name>ATP</name>
        <dbReference type="ChEBI" id="CHEBI:30616"/>
    </ligand>
</feature>
<feature type="binding site" evidence="2">
    <location>
        <begin position="86"/>
        <end position="90"/>
    </location>
    <ligand>
        <name>ATP</name>
        <dbReference type="ChEBI" id="CHEBI:30616"/>
    </ligand>
</feature>
<feature type="binding site" evidence="2">
    <location>
        <position position="413"/>
    </location>
    <ligand>
        <name>ATP</name>
        <dbReference type="ChEBI" id="CHEBI:30616"/>
    </ligand>
</feature>
<feature type="binding site" evidence="2">
    <location>
        <begin position="476"/>
        <end position="478"/>
    </location>
    <ligand>
        <name>ATP</name>
        <dbReference type="ChEBI" id="CHEBI:30616"/>
    </ligand>
</feature>
<feature type="binding site" evidence="2">
    <location>
        <position position="492"/>
    </location>
    <ligand>
        <name>ATP</name>
        <dbReference type="ChEBI" id="CHEBI:30616"/>
    </ligand>
</feature>
<protein>
    <recommendedName>
        <fullName evidence="2">Chaperonin GroEL</fullName>
        <ecNumber evidence="2">5.6.1.7</ecNumber>
    </recommendedName>
    <alternativeName>
        <fullName evidence="2">60 kDa chaperonin</fullName>
    </alternativeName>
    <alternativeName>
        <fullName evidence="2">Chaperonin-60</fullName>
        <shortName evidence="2">Cpn60</shortName>
    </alternativeName>
</protein>
<keyword id="KW-0067">ATP-binding</keyword>
<keyword id="KW-0143">Chaperone</keyword>
<keyword id="KW-0963">Cytoplasm</keyword>
<keyword id="KW-0413">Isomerase</keyword>
<keyword id="KW-0547">Nucleotide-binding</keyword>
<sequence>MAKDIKFSADARAAMVRGVDMLADTVKVTLGPKGRNVVLEKAFGSPLITNDGVTIAKEIELEDHFENMGAKLVSEVASKTNDIAGDGTTTATVLTQAIVHEGLKNVTAGANPIGIRRGIETATATAVEALKAIAQPVSGKEAIAQVAAVSSRSEKVGEYISEAMERVGNDGVITIEESRGMETELEVVEGMQFDRGYLSQYMVTDNEKMVADLENPFILITDKKVSNIQDILPLLEEVLKTNRPLLIIADDVDGEALPTLVLNKIRGTFNVVAVKAPGFGDRRKAMLEDIAILTGGTVITEDLGLELKDATMTALGQAAKITVDKDSTVIVEGSGSSEAIANRIALIKSQLETTTSDFDREKLQERLAKLGGGVAVIKVGAPTETALKEMKLRIEDALNATRAAVEEGIVAGGGTALITVIEKVAALELEGDDATGRNIVLRALEEPVRQIALNAGYEGSVVIDKLKNSPAGTGFNAATGEWVDMIKTGIIDPVKVTRSALQNAASVASLILTTEAVVANKPEPAAPAPAMPAGMDPGMMGGF</sequence>